<keyword id="KW-0090">Biological rhythms</keyword>
<keyword id="KW-0157">Chromophore</keyword>
<keyword id="KW-0963">Cytoplasm</keyword>
<keyword id="KW-0274">FAD</keyword>
<keyword id="KW-0285">Flavoprotein</keyword>
<keyword id="KW-0547">Nucleotide-binding</keyword>
<keyword id="KW-0539">Nucleus</keyword>
<keyword id="KW-0600">Photoreceptor protein</keyword>
<keyword id="KW-0675">Receptor</keyword>
<keyword id="KW-1185">Reference proteome</keyword>
<keyword id="KW-0678">Repressor</keyword>
<keyword id="KW-0716">Sensory transduction</keyword>
<keyword id="KW-0804">Transcription</keyword>
<keyword id="KW-0805">Transcription regulation</keyword>
<sequence length="545" mass="62497">MTINNILWFRHGLRLHDNPSLLEALKSDCVNQSSEAVKLFPIFIFDGESAGTRIVGYNRMKFLLESLADLDRQFRDLGGQLLVFRGDSVTVLRRLFEELNIKKLCYEQDCEPIWKERDDAVAKLCRTMDVRCVENVSHTLWNPIEVIQTNGDIPPLTYQMFLHTVNIIGDPPRPVGAPNFEYVEFGRVPALLASELKLCQQMPAPDDFGIHYDGNARIAFQKWIGGETRALEALGARLKQEEEAFREGYYLPTQAKPEILGPATSMSAALRFGCLSVRMFYWCVHDLFAKVQSNSQFKYPGGHHITGQLIWREYFYTMSVQNPHYGEMERNPICLNIPWYKPEDDSLTRWKEGRTGFPMIDAAMRQLLAEGWLHHILRNITATFLTRGGLWLSWEEGLQHFLKYLLDADWSVCAGNWMWVSSSAFERLLDSSKCTCPIALARRLDPKGDYVKRYLPELANYPAQFVHEPWKASREQQIEYGCVIGEKYPAPMVDLAIVSKRNAHTMASLREKLVDGGSTPPHCRPSDIEEIRQFFWLADDAATEA</sequence>
<protein>
    <recommendedName>
        <fullName>Cryptochrome-1</fullName>
        <shortName evidence="4">agCRY1</shortName>
    </recommendedName>
</protein>
<proteinExistence type="evidence at transcript level"/>
<organism>
    <name type="scientific">Anopheles gambiae</name>
    <name type="common">African malaria mosquito</name>
    <dbReference type="NCBI Taxonomy" id="7165"/>
    <lineage>
        <taxon>Eukaryota</taxon>
        <taxon>Metazoa</taxon>
        <taxon>Ecdysozoa</taxon>
        <taxon>Arthropoda</taxon>
        <taxon>Hexapoda</taxon>
        <taxon>Insecta</taxon>
        <taxon>Pterygota</taxon>
        <taxon>Neoptera</taxon>
        <taxon>Endopterygota</taxon>
        <taxon>Diptera</taxon>
        <taxon>Nematocera</taxon>
        <taxon>Culicoidea</taxon>
        <taxon>Culicidae</taxon>
        <taxon>Anophelinae</taxon>
        <taxon>Anopheles</taxon>
    </lineage>
</organism>
<accession>Q7PYI7</accession>
<accession>Q0QW08</accession>
<name>CRY1_ANOGA</name>
<gene>
    <name evidence="5" type="primary">Cry1</name>
    <name type="ORF">AGAP001958</name>
</gene>
<dbReference type="EMBL" id="DQ219482">
    <property type="protein sequence ID" value="ABB29886.1"/>
    <property type="molecule type" value="mRNA"/>
</dbReference>
<dbReference type="EMBL" id="AAAB01008987">
    <property type="protein sequence ID" value="EAA01270.4"/>
    <property type="molecule type" value="Genomic_DNA"/>
</dbReference>
<dbReference type="SMR" id="Q7PYI7"/>
<dbReference type="FunCoup" id="Q7PYI7">
    <property type="interactions" value="19"/>
</dbReference>
<dbReference type="STRING" id="7165.Q7PYI7"/>
<dbReference type="PaxDb" id="7165-AGAP001958-PA"/>
<dbReference type="EnsemblMetazoa" id="AGAP001958-RA">
    <property type="protein sequence ID" value="AGAP001958-PA"/>
    <property type="gene ID" value="AGAP001958"/>
</dbReference>
<dbReference type="GeneID" id="1281165"/>
<dbReference type="KEGG" id="aga:1281165"/>
<dbReference type="CTD" id="42305"/>
<dbReference type="VEuPathDB" id="VectorBase:AGAMI1_000226"/>
<dbReference type="VEuPathDB" id="VectorBase:AGAP001958"/>
<dbReference type="eggNOG" id="KOG0133">
    <property type="taxonomic scope" value="Eukaryota"/>
</dbReference>
<dbReference type="HOGENOM" id="CLU_010348_3_4_1"/>
<dbReference type="InParanoid" id="Q7PYI7"/>
<dbReference type="OMA" id="IWFRHGL"/>
<dbReference type="OrthoDB" id="435881at2759"/>
<dbReference type="PhylomeDB" id="Q7PYI7"/>
<dbReference type="Proteomes" id="UP000007062">
    <property type="component" value="Chromosome 2R"/>
</dbReference>
<dbReference type="GO" id="GO:0005737">
    <property type="term" value="C:cytoplasm"/>
    <property type="evidence" value="ECO:0000250"/>
    <property type="project" value="UniProtKB"/>
</dbReference>
<dbReference type="GO" id="GO:0005634">
    <property type="term" value="C:nucleus"/>
    <property type="evidence" value="ECO:0000250"/>
    <property type="project" value="UniProtKB"/>
</dbReference>
<dbReference type="GO" id="GO:0048471">
    <property type="term" value="C:perinuclear region of cytoplasm"/>
    <property type="evidence" value="ECO:0007669"/>
    <property type="project" value="UniProtKB-SubCell"/>
</dbReference>
<dbReference type="GO" id="GO:0009882">
    <property type="term" value="F:blue light photoreceptor activity"/>
    <property type="evidence" value="ECO:0000250"/>
    <property type="project" value="UniProtKB"/>
</dbReference>
<dbReference type="GO" id="GO:0003677">
    <property type="term" value="F:DNA binding"/>
    <property type="evidence" value="ECO:0000318"/>
    <property type="project" value="GO_Central"/>
</dbReference>
<dbReference type="GO" id="GO:0071949">
    <property type="term" value="F:FAD binding"/>
    <property type="evidence" value="ECO:0000318"/>
    <property type="project" value="GO_Central"/>
</dbReference>
<dbReference type="GO" id="GO:0050660">
    <property type="term" value="F:flavin adenine dinucleotide binding"/>
    <property type="evidence" value="ECO:0000250"/>
    <property type="project" value="UniProtKB"/>
</dbReference>
<dbReference type="GO" id="GO:0032922">
    <property type="term" value="P:circadian regulation of gene expression"/>
    <property type="evidence" value="ECO:0000318"/>
    <property type="project" value="GO_Central"/>
</dbReference>
<dbReference type="GO" id="GO:0043153">
    <property type="term" value="P:entrainment of circadian clock by photoperiod"/>
    <property type="evidence" value="ECO:0000318"/>
    <property type="project" value="GO_Central"/>
</dbReference>
<dbReference type="GO" id="GO:0045892">
    <property type="term" value="P:negative regulation of DNA-templated transcription"/>
    <property type="evidence" value="ECO:0000250"/>
    <property type="project" value="UniProtKB"/>
</dbReference>
<dbReference type="GO" id="GO:0006139">
    <property type="term" value="P:nucleobase-containing compound metabolic process"/>
    <property type="evidence" value="ECO:0007669"/>
    <property type="project" value="UniProtKB-ARBA"/>
</dbReference>
<dbReference type="GO" id="GO:0042752">
    <property type="term" value="P:regulation of circadian rhythm"/>
    <property type="evidence" value="ECO:0000250"/>
    <property type="project" value="UniProtKB"/>
</dbReference>
<dbReference type="GO" id="GO:0006950">
    <property type="term" value="P:response to stress"/>
    <property type="evidence" value="ECO:0007669"/>
    <property type="project" value="UniProtKB-ARBA"/>
</dbReference>
<dbReference type="FunFam" id="3.40.50.620:FF:000243">
    <property type="entry name" value="Cryptochrome-1"/>
    <property type="match status" value="1"/>
</dbReference>
<dbReference type="Gene3D" id="1.25.40.80">
    <property type="match status" value="1"/>
</dbReference>
<dbReference type="Gene3D" id="1.10.579.10">
    <property type="entry name" value="DNA Cyclobutane Dipyrimidine Photolyase, subunit A, domain 3"/>
    <property type="match status" value="1"/>
</dbReference>
<dbReference type="Gene3D" id="3.40.50.620">
    <property type="entry name" value="HUPs"/>
    <property type="match status" value="1"/>
</dbReference>
<dbReference type="InterPro" id="IPR036134">
    <property type="entry name" value="Crypto/Photolyase_FAD-like_sf"/>
</dbReference>
<dbReference type="InterPro" id="IPR036155">
    <property type="entry name" value="Crypto/Photolyase_N_sf"/>
</dbReference>
<dbReference type="InterPro" id="IPR005101">
    <property type="entry name" value="Cryptochr/Photolyase_FAD-bd"/>
</dbReference>
<dbReference type="InterPro" id="IPR002081">
    <property type="entry name" value="Cryptochrome/DNA_photolyase_1"/>
</dbReference>
<dbReference type="InterPro" id="IPR018394">
    <property type="entry name" value="DNA_photolyase_1_CS_C"/>
</dbReference>
<dbReference type="InterPro" id="IPR006050">
    <property type="entry name" value="DNA_photolyase_N"/>
</dbReference>
<dbReference type="InterPro" id="IPR014729">
    <property type="entry name" value="Rossmann-like_a/b/a_fold"/>
</dbReference>
<dbReference type="PANTHER" id="PTHR11455">
    <property type="entry name" value="CRYPTOCHROME"/>
    <property type="match status" value="1"/>
</dbReference>
<dbReference type="PANTHER" id="PTHR11455:SF17">
    <property type="entry name" value="CRYPTOCHROME-1"/>
    <property type="match status" value="1"/>
</dbReference>
<dbReference type="Pfam" id="PF00875">
    <property type="entry name" value="DNA_photolyase"/>
    <property type="match status" value="1"/>
</dbReference>
<dbReference type="Pfam" id="PF03441">
    <property type="entry name" value="FAD_binding_7"/>
    <property type="match status" value="1"/>
</dbReference>
<dbReference type="PRINTS" id="PR00147">
    <property type="entry name" value="DNAPHOTLYASE"/>
</dbReference>
<dbReference type="SUPFAM" id="SSF48173">
    <property type="entry name" value="Cryptochrome/photolyase FAD-binding domain"/>
    <property type="match status" value="1"/>
</dbReference>
<dbReference type="SUPFAM" id="SSF52425">
    <property type="entry name" value="Cryptochrome/photolyase, N-terminal domain"/>
    <property type="match status" value="1"/>
</dbReference>
<dbReference type="PROSITE" id="PS00394">
    <property type="entry name" value="DNA_PHOTOLYASES_1_1"/>
    <property type="match status" value="1"/>
</dbReference>
<dbReference type="PROSITE" id="PS51645">
    <property type="entry name" value="PHR_CRY_ALPHA_BETA"/>
    <property type="match status" value="1"/>
</dbReference>
<reference evidence="5" key="1">
    <citation type="journal article" date="2005" name="Curr. Biol.">
        <title>The two CRYs of the butterfly.</title>
        <authorList>
            <person name="Zhu H."/>
            <person name="Yuan Q."/>
            <person name="Briscoe A.D."/>
            <person name="Froy O."/>
            <person name="Casselman A."/>
            <person name="Reppert S.M."/>
        </authorList>
    </citation>
    <scope>NUCLEOTIDE SEQUENCE [MRNA]</scope>
</reference>
<reference evidence="6" key="2">
    <citation type="journal article" date="2002" name="Science">
        <title>The genome sequence of the malaria mosquito Anopheles gambiae.</title>
        <authorList>
            <person name="Holt R.A."/>
            <person name="Subramanian G.M."/>
            <person name="Halpern A."/>
            <person name="Sutton G.G."/>
            <person name="Charlab R."/>
            <person name="Nusskern D.R."/>
            <person name="Wincker P."/>
            <person name="Clark A.G."/>
            <person name="Ribeiro J.M.C."/>
            <person name="Wides R."/>
            <person name="Salzberg S.L."/>
            <person name="Loftus B.J."/>
            <person name="Yandell M.D."/>
            <person name="Majoros W.H."/>
            <person name="Rusch D.B."/>
            <person name="Lai Z."/>
            <person name="Kraft C.L."/>
            <person name="Abril J.F."/>
            <person name="Anthouard V."/>
            <person name="Arensburger P."/>
            <person name="Atkinson P.W."/>
            <person name="Baden H."/>
            <person name="de Berardinis V."/>
            <person name="Baldwin D."/>
            <person name="Benes V."/>
            <person name="Biedler J."/>
            <person name="Blass C."/>
            <person name="Bolanos R."/>
            <person name="Boscus D."/>
            <person name="Barnstead M."/>
            <person name="Cai S."/>
            <person name="Center A."/>
            <person name="Chaturverdi K."/>
            <person name="Christophides G.K."/>
            <person name="Chrystal M.A.M."/>
            <person name="Clamp M."/>
            <person name="Cravchik A."/>
            <person name="Curwen V."/>
            <person name="Dana A."/>
            <person name="Delcher A."/>
            <person name="Dew I."/>
            <person name="Evans C.A."/>
            <person name="Flanigan M."/>
            <person name="Grundschober-Freimoser A."/>
            <person name="Friedli L."/>
            <person name="Gu Z."/>
            <person name="Guan P."/>
            <person name="Guigo R."/>
            <person name="Hillenmeyer M.E."/>
            <person name="Hladun S.L."/>
            <person name="Hogan J.R."/>
            <person name="Hong Y.S."/>
            <person name="Hoover J."/>
            <person name="Jaillon O."/>
            <person name="Ke Z."/>
            <person name="Kodira C.D."/>
            <person name="Kokoza E."/>
            <person name="Koutsos A."/>
            <person name="Letunic I."/>
            <person name="Levitsky A.A."/>
            <person name="Liang Y."/>
            <person name="Lin J.-J."/>
            <person name="Lobo N.F."/>
            <person name="Lopez J.R."/>
            <person name="Malek J.A."/>
            <person name="McIntosh T.C."/>
            <person name="Meister S."/>
            <person name="Miller J.R."/>
            <person name="Mobarry C."/>
            <person name="Mongin E."/>
            <person name="Murphy S.D."/>
            <person name="O'Brochta D.A."/>
            <person name="Pfannkoch C."/>
            <person name="Qi R."/>
            <person name="Regier M.A."/>
            <person name="Remington K."/>
            <person name="Shao H."/>
            <person name="Sharakhova M.V."/>
            <person name="Sitter C.D."/>
            <person name="Shetty J."/>
            <person name="Smith T.J."/>
            <person name="Strong R."/>
            <person name="Sun J."/>
            <person name="Thomasova D."/>
            <person name="Ton L.Q."/>
            <person name="Topalis P."/>
            <person name="Tu Z.J."/>
            <person name="Unger M.F."/>
            <person name="Walenz B."/>
            <person name="Wang A.H."/>
            <person name="Wang J."/>
            <person name="Wang M."/>
            <person name="Wang X."/>
            <person name="Woodford K.J."/>
            <person name="Wortman J.R."/>
            <person name="Wu M."/>
            <person name="Yao A."/>
            <person name="Zdobnov E.M."/>
            <person name="Zhang H."/>
            <person name="Zhao Q."/>
            <person name="Zhao S."/>
            <person name="Zhu S.C."/>
            <person name="Zhimulev I."/>
            <person name="Coluzzi M."/>
            <person name="della Torre A."/>
            <person name="Roth C.W."/>
            <person name="Louis C."/>
            <person name="Kalush F."/>
            <person name="Mural R.J."/>
            <person name="Myers E.W."/>
            <person name="Adams M.D."/>
            <person name="Smith H.O."/>
            <person name="Broder S."/>
            <person name="Gardner M.J."/>
            <person name="Fraser C.M."/>
            <person name="Birney E."/>
            <person name="Bork P."/>
            <person name="Brey P.T."/>
            <person name="Venter J.C."/>
            <person name="Weissenbach J."/>
            <person name="Kafatos F.C."/>
            <person name="Collins F.H."/>
            <person name="Hoffman S.L."/>
        </authorList>
    </citation>
    <scope>NUCLEOTIDE SEQUENCE [LARGE SCALE GENOMIC DNA]</scope>
    <source>
        <strain>PEST</strain>
    </source>
</reference>
<comment type="function">
    <text evidence="1">Blue light-dependent regulator that is the input of the circadian feedback loop. Has no photolyase activity for cyclobutane pyrimidine dimers or 6-4 photoproducts. Regulation of expression by light suggests a role in photoreception for locomotor activity rhythms. Functions, together with per, as a transcriptional repressor required for the oscillation of peripheral circadian clocks and for the correct specification of clock cells. Genes directly activated by the transcription factors Clock (Clk) and cycle (cyc) are repressed by cry (By similarity).</text>
</comment>
<comment type="cofactor">
    <cofactor evidence="2">
        <name>FAD</name>
        <dbReference type="ChEBI" id="CHEBI:57692"/>
    </cofactor>
    <text evidence="2">Binds 1 FAD per subunit.</text>
</comment>
<comment type="subunit">
    <text evidence="2">Interacts with tim and per; promoted by light conditions.</text>
</comment>
<comment type="subcellular location">
    <subcellularLocation>
        <location evidence="2">Cytoplasm</location>
    </subcellularLocation>
    <subcellularLocation>
        <location evidence="2">Cytoplasm</location>
        <location evidence="2">Perinuclear region</location>
    </subcellularLocation>
    <subcellularLocation>
        <location evidence="2">Nucleus</location>
    </subcellularLocation>
    <text evidence="1">Nuclear translocation initiates after the perception of a light signal.</text>
</comment>
<comment type="domain">
    <text>FAD-binding region regulates cry stability, cry-tim interaction, and circadian photosensitivity.</text>
</comment>
<comment type="domain">
    <text evidence="1">Photolyase/cryptochrome alpha/beta domain is sufficient for light detection and phototransduction.</text>
</comment>
<comment type="similarity">
    <text evidence="3">Belongs to the DNA photolyase class-1 family.</text>
</comment>
<evidence type="ECO:0000250" key="1"/>
<evidence type="ECO:0000250" key="2">
    <source>
        <dbReference type="UniProtKB" id="O77059"/>
    </source>
</evidence>
<evidence type="ECO:0000255" key="3"/>
<evidence type="ECO:0000303" key="4">
    <source>
    </source>
</evidence>
<evidence type="ECO:0000312" key="5">
    <source>
        <dbReference type="EMBL" id="ABB29886.1"/>
    </source>
</evidence>
<evidence type="ECO:0000312" key="6">
    <source>
        <dbReference type="EMBL" id="EAA01270.4"/>
    </source>
</evidence>
<feature type="chain" id="PRO_0000348594" description="Cryptochrome-1">
    <location>
        <begin position="1"/>
        <end position="545"/>
    </location>
</feature>
<feature type="domain" description="Photolyase/cryptochrome alpha/beta">
    <location>
        <begin position="3"/>
        <end position="140"/>
    </location>
</feature>
<feature type="binding site" evidence="1">
    <location>
        <position position="237"/>
    </location>
    <ligand>
        <name>FAD</name>
        <dbReference type="ChEBI" id="CHEBI:57692"/>
    </ligand>
</feature>
<feature type="binding site" evidence="1">
    <location>
        <position position="265"/>
    </location>
    <ligand>
        <name>FAD</name>
        <dbReference type="ChEBI" id="CHEBI:57692"/>
    </ligand>
</feature>
<feature type="binding site" evidence="1">
    <location>
        <position position="267"/>
    </location>
    <ligand>
        <name>FAD</name>
        <dbReference type="ChEBI" id="CHEBI:57692"/>
    </ligand>
</feature>
<feature type="binding site" evidence="1">
    <location>
        <position position="308"/>
    </location>
    <ligand>
        <name>FAD</name>
        <dbReference type="ChEBI" id="CHEBI:57692"/>
    </ligand>
</feature>
<feature type="binding site" evidence="1">
    <location>
        <position position="375"/>
    </location>
    <ligand>
        <name>FAD</name>
        <dbReference type="ChEBI" id="CHEBI:57692"/>
    </ligand>
</feature>
<feature type="binding site" evidence="1">
    <location>
        <begin position="407"/>
        <end position="409"/>
    </location>
    <ligand>
        <name>FAD</name>
        <dbReference type="ChEBI" id="CHEBI:57692"/>
    </ligand>
</feature>
<feature type="binding site" evidence="1">
    <location>
        <position position="413"/>
    </location>
    <ligand>
        <name>FAD</name>
        <dbReference type="ChEBI" id="CHEBI:57692"/>
    </ligand>
</feature>
<feature type="binding site" evidence="1">
    <location>
        <position position="416"/>
    </location>
    <ligand>
        <name>FAD</name>
        <dbReference type="ChEBI" id="CHEBI:57692"/>
    </ligand>
</feature>